<protein>
    <recommendedName>
        <fullName>Protein B17</fullName>
    </recommendedName>
</protein>
<accession>Q01221</accession>
<accession>Q76ZK7</accession>
<organism>
    <name type="scientific">Vaccinia virus (strain Western Reserve)</name>
    <name type="common">VACV</name>
    <name type="synonym">Vaccinia virus (strain WR)</name>
    <dbReference type="NCBI Taxonomy" id="10254"/>
    <lineage>
        <taxon>Viruses</taxon>
        <taxon>Varidnaviria</taxon>
        <taxon>Bamfordvirae</taxon>
        <taxon>Nucleocytoviricota</taxon>
        <taxon>Pokkesviricetes</taxon>
        <taxon>Chitovirales</taxon>
        <taxon>Poxviridae</taxon>
        <taxon>Chordopoxvirinae</taxon>
        <taxon>Orthopoxvirus</taxon>
        <taxon>Vaccinia virus</taxon>
    </lineage>
</organism>
<sequence length="340" mass="39565">MSRKFMQVYEYDREQYLDEFIEDRYNDSFITSPEYYSAEKYMCRYTTLNHNCINVRRCALDSKLLHDIITNCKIYNNIELVRATKFVYYLDLIKCNWVSKVGDSVLYPVIFITHTSTRNLDKVSVKTYKGVKVKKLNRCADHAIVINPFVKFKLTLPNKTSHAKVLVTFCKLKTDITPVEAPLPGNVLVYTFPDINKRIPGYIHLNIEGCIDGMIYINSSKFACVLKLHRSMYRIPPFPIDICSCCSQYINYDIEIPIHDLIKDVAIFKNKETVYYLKLNNKTIARFTYFNNIDTAITQEHEYVKIALGIVCKLMINNMHSIVGVNHSNTFVNCLLEDNV</sequence>
<keyword id="KW-1185">Reference proteome</keyword>
<reference key="1">
    <citation type="journal article" date="1991" name="J. Gen. Virol.">
        <title>Nucleotide sequence of 42 kbp of vaccinia virus strain WR from near the right inverted terminal repeat.</title>
        <authorList>
            <person name="Smith G.L."/>
            <person name="Chan Y.S."/>
            <person name="Howard S.T."/>
        </authorList>
    </citation>
    <scope>NUCLEOTIDE SEQUENCE [GENOMIC DNA]</scope>
</reference>
<reference key="2">
    <citation type="submission" date="2003-02" db="EMBL/GenBank/DDBJ databases">
        <title>Sequencing of the coding region of Vaccinia-WR to an average 9-fold redundancy and an error rate of 0.16/10kb.</title>
        <authorList>
            <person name="Esposito J.J."/>
            <person name="Frace A.M."/>
            <person name="Sammons S.A."/>
            <person name="Olsen-Rasmussen M."/>
            <person name="Osborne J."/>
            <person name="Wohlhueter R."/>
        </authorList>
    </citation>
    <scope>NUCLEOTIDE SEQUENCE [LARGE SCALE GENOMIC DNA]</scope>
</reference>
<comment type="similarity">
    <text evidence="1">Belongs to the orthopoxvirus B17 protein family.</text>
</comment>
<gene>
    <name type="ordered locus">VACWR198</name>
    <name type="ORF">B16L</name>
</gene>
<evidence type="ECO:0000305" key="1"/>
<name>B17_VACCW</name>
<proteinExistence type="inferred from homology"/>
<dbReference type="EMBL" id="D11079">
    <property type="protein sequence ID" value="BAA01846.1"/>
    <property type="molecule type" value="Genomic_DNA"/>
</dbReference>
<dbReference type="EMBL" id="AY243312">
    <property type="protein sequence ID" value="AAO89477.1"/>
    <property type="molecule type" value="Genomic_DNA"/>
</dbReference>
<dbReference type="PIR" id="JQ1810">
    <property type="entry name" value="JQ1810"/>
</dbReference>
<dbReference type="DNASU" id="3707575"/>
<dbReference type="KEGG" id="vg:3707575"/>
<dbReference type="Proteomes" id="UP000000344">
    <property type="component" value="Genome"/>
</dbReference>
<dbReference type="InterPro" id="IPR009633">
    <property type="entry name" value="Vaccinia_virus_B17"/>
</dbReference>
<dbReference type="Pfam" id="PF06802">
    <property type="entry name" value="DUF1231"/>
    <property type="match status" value="1"/>
</dbReference>
<feature type="chain" id="PRO_0000099370" description="Protein B17">
    <location>
        <begin position="1"/>
        <end position="340"/>
    </location>
</feature>
<organismHost>
    <name type="scientific">Bos taurus</name>
    <name type="common">Bovine</name>
    <dbReference type="NCBI Taxonomy" id="9913"/>
</organismHost>